<keyword id="KW-0235">DNA replication</keyword>
<keyword id="KW-0238">DNA-binding</keyword>
<keyword id="KW-0639">Primosome</keyword>
<evidence type="ECO:0000255" key="1">
    <source>
        <dbReference type="HAMAP-Rule" id="MF_00720"/>
    </source>
</evidence>
<dbReference type="EMBL" id="CP000305">
    <property type="protein sequence ID" value="ABG19609.1"/>
    <property type="molecule type" value="Genomic_DNA"/>
</dbReference>
<dbReference type="EMBL" id="ACNQ01000017">
    <property type="protein sequence ID" value="EEO75791.1"/>
    <property type="molecule type" value="Genomic_DNA"/>
</dbReference>
<dbReference type="RefSeq" id="WP_002210154.1">
    <property type="nucleotide sequence ID" value="NZ_ACNQ01000017.1"/>
</dbReference>
<dbReference type="SMR" id="Q1CEH1"/>
<dbReference type="GeneID" id="96663941"/>
<dbReference type="KEGG" id="ypn:YPN_3282"/>
<dbReference type="HOGENOM" id="CLU_166075_0_0_6"/>
<dbReference type="Proteomes" id="UP000008936">
    <property type="component" value="Chromosome"/>
</dbReference>
<dbReference type="GO" id="GO:1990077">
    <property type="term" value="C:primosome complex"/>
    <property type="evidence" value="ECO:0007669"/>
    <property type="project" value="UniProtKB-KW"/>
</dbReference>
<dbReference type="GO" id="GO:0003697">
    <property type="term" value="F:single-stranded DNA binding"/>
    <property type="evidence" value="ECO:0007669"/>
    <property type="project" value="UniProtKB-UniRule"/>
</dbReference>
<dbReference type="GO" id="GO:0006269">
    <property type="term" value="P:DNA replication, synthesis of primer"/>
    <property type="evidence" value="ECO:0007669"/>
    <property type="project" value="UniProtKB-KW"/>
</dbReference>
<dbReference type="Gene3D" id="2.40.50.140">
    <property type="entry name" value="Nucleic acid-binding proteins"/>
    <property type="match status" value="1"/>
</dbReference>
<dbReference type="HAMAP" id="MF_00720">
    <property type="entry name" value="PriB"/>
    <property type="match status" value="1"/>
</dbReference>
<dbReference type="InterPro" id="IPR012340">
    <property type="entry name" value="NA-bd_OB-fold"/>
</dbReference>
<dbReference type="InterPro" id="IPR000424">
    <property type="entry name" value="Primosome_PriB/ssb"/>
</dbReference>
<dbReference type="InterPro" id="IPR023646">
    <property type="entry name" value="Prisomal_replication_PriB"/>
</dbReference>
<dbReference type="NCBIfam" id="TIGR04418">
    <property type="entry name" value="PriB_gamma"/>
    <property type="match status" value="1"/>
</dbReference>
<dbReference type="Pfam" id="PF22657">
    <property type="entry name" value="SSB_1"/>
    <property type="match status" value="1"/>
</dbReference>
<dbReference type="PIRSF" id="PIRSF003135">
    <property type="entry name" value="Primosomal_n"/>
    <property type="match status" value="1"/>
</dbReference>
<dbReference type="SUPFAM" id="SSF50249">
    <property type="entry name" value="Nucleic acid-binding proteins"/>
    <property type="match status" value="1"/>
</dbReference>
<dbReference type="PROSITE" id="PS50935">
    <property type="entry name" value="SSB"/>
    <property type="match status" value="1"/>
</dbReference>
<comment type="function">
    <text evidence="1">Involved in the restart of stalled replication forks, which reloads the replicative helicase on sites other than the origin of replication; the PriA-PriB pathway is the major replication restart pathway. During primosome assembly it facilitates complex formation between PriA and DnaT on DNA; stabilizes PriA on DNA. Stimulates the DNA unwinding activity of PriA helicase.</text>
</comment>
<comment type="subunit">
    <text evidence="1">Homodimer. Interacts with PriA and DnaT. Component of the replication restart primosome. Primosome assembly occurs via a 'hand-off' mechanism. PriA binds to replication forks, subsequently PriB then DnaT bind; DnaT then displaces ssDNA to generate the helicase loading substrate.</text>
</comment>
<comment type="similarity">
    <text evidence="1">Belongs to the PriB family.</text>
</comment>
<feature type="chain" id="PRO_1000083305" description="Replication restart protein PriB">
    <location>
        <begin position="1"/>
        <end position="106"/>
    </location>
</feature>
<feature type="domain" description="SSB" evidence="1">
    <location>
        <begin position="4"/>
        <end position="103"/>
    </location>
</feature>
<reference key="1">
    <citation type="journal article" date="2006" name="J. Bacteriol.">
        <title>Complete genome sequence of Yersinia pestis strains Antiqua and Nepal516: evidence of gene reduction in an emerging pathogen.</title>
        <authorList>
            <person name="Chain P.S.G."/>
            <person name="Hu P."/>
            <person name="Malfatti S.A."/>
            <person name="Radnedge L."/>
            <person name="Larimer F."/>
            <person name="Vergez L.M."/>
            <person name="Worsham P."/>
            <person name="Chu M.C."/>
            <person name="Andersen G.L."/>
        </authorList>
    </citation>
    <scope>NUCLEOTIDE SEQUENCE [LARGE SCALE GENOMIC DNA]</scope>
    <source>
        <strain>Nepal516</strain>
    </source>
</reference>
<reference key="2">
    <citation type="submission" date="2009-04" db="EMBL/GenBank/DDBJ databases">
        <title>Yersinia pestis Nepal516A whole genome shotgun sequencing project.</title>
        <authorList>
            <person name="Plunkett G. III"/>
            <person name="Anderson B.D."/>
            <person name="Baumler D.J."/>
            <person name="Burland V."/>
            <person name="Cabot E.L."/>
            <person name="Glasner J.D."/>
            <person name="Mau B."/>
            <person name="Neeno-Eckwall E."/>
            <person name="Perna N.T."/>
            <person name="Munk A.C."/>
            <person name="Tapia R."/>
            <person name="Green L.D."/>
            <person name="Rogers Y.C."/>
            <person name="Detter J.C."/>
            <person name="Bruce D.C."/>
            <person name="Brettin T.S."/>
        </authorList>
    </citation>
    <scope>NUCLEOTIDE SEQUENCE [LARGE SCALE GENOMIC DNA]</scope>
    <source>
        <strain>Nepal516</strain>
    </source>
</reference>
<sequence length="106" mass="11632">MVTTNRLVLSGTVCKTPVRKVSPSGIPHCQFVLEHRSTQQEAGFSRQTWCRMPIVVSGQQSQALTHSITVGSQLTVEGFISCHQGRNGLNKLVLHAEQIEFIDSGD</sequence>
<organism>
    <name type="scientific">Yersinia pestis bv. Antiqua (strain Nepal516)</name>
    <dbReference type="NCBI Taxonomy" id="377628"/>
    <lineage>
        <taxon>Bacteria</taxon>
        <taxon>Pseudomonadati</taxon>
        <taxon>Pseudomonadota</taxon>
        <taxon>Gammaproteobacteria</taxon>
        <taxon>Enterobacterales</taxon>
        <taxon>Yersiniaceae</taxon>
        <taxon>Yersinia</taxon>
    </lineage>
</organism>
<proteinExistence type="inferred from homology"/>
<protein>
    <recommendedName>
        <fullName evidence="1">Replication restart protein PriB</fullName>
    </recommendedName>
</protein>
<name>PRIB_YERPN</name>
<gene>
    <name evidence="1" type="primary">priB</name>
    <name type="ordered locus">YPN_3282</name>
    <name type="ORF">YP516_3727</name>
</gene>
<accession>Q1CEH1</accession>
<accession>C4GXZ1</accession>